<keyword id="KW-0880">Kelch repeat</keyword>
<keyword id="KW-1185">Reference proteome</keyword>
<keyword id="KW-0677">Repeat</keyword>
<gene>
    <name type="ordered locus">At1g20790</name>
    <name type="ORF">F2D10.28</name>
</gene>
<proteinExistence type="predicted"/>
<dbReference type="EMBL" id="AC069251">
    <property type="protein sequence ID" value="AAF80631.1"/>
    <property type="molecule type" value="Genomic_DNA"/>
</dbReference>
<dbReference type="EMBL" id="CP002684">
    <property type="protein sequence ID" value="AEE30022.1"/>
    <property type="molecule type" value="Genomic_DNA"/>
</dbReference>
<dbReference type="PIR" id="C86340">
    <property type="entry name" value="C86340"/>
</dbReference>
<dbReference type="RefSeq" id="NP_173502.2">
    <property type="nucleotide sequence ID" value="NM_101931.3"/>
</dbReference>
<dbReference type="SMR" id="Q9LM75"/>
<dbReference type="FunCoup" id="Q9LM75">
    <property type="interactions" value="22"/>
</dbReference>
<dbReference type="PaxDb" id="3702-AT1G20790.1"/>
<dbReference type="EnsemblPlants" id="AT1G20790.1">
    <property type="protein sequence ID" value="AT1G20790.1"/>
    <property type="gene ID" value="AT1G20790"/>
</dbReference>
<dbReference type="GeneID" id="838669"/>
<dbReference type="Gramene" id="AT1G20790.1">
    <property type="protein sequence ID" value="AT1G20790.1"/>
    <property type="gene ID" value="AT1G20790"/>
</dbReference>
<dbReference type="KEGG" id="ath:AT1G20790"/>
<dbReference type="Araport" id="AT1G20790"/>
<dbReference type="TAIR" id="AT1G20790"/>
<dbReference type="eggNOG" id="ENOG502STF4">
    <property type="taxonomic scope" value="Eukaryota"/>
</dbReference>
<dbReference type="HOGENOM" id="CLU_061894_0_0_1"/>
<dbReference type="InParanoid" id="Q9LM75"/>
<dbReference type="OMA" id="ERINEFW"/>
<dbReference type="PhylomeDB" id="Q9LM75"/>
<dbReference type="PRO" id="PR:Q9LM75"/>
<dbReference type="Proteomes" id="UP000006548">
    <property type="component" value="Chromosome 1"/>
</dbReference>
<dbReference type="ExpressionAtlas" id="Q9LM75">
    <property type="expression patterns" value="baseline and differential"/>
</dbReference>
<dbReference type="InterPro" id="IPR036047">
    <property type="entry name" value="F-box-like_dom_sf"/>
</dbReference>
<dbReference type="InterPro" id="IPR001810">
    <property type="entry name" value="F-box_dom"/>
</dbReference>
<dbReference type="InterPro" id="IPR050796">
    <property type="entry name" value="SCF_F-box_component"/>
</dbReference>
<dbReference type="PANTHER" id="PTHR31672">
    <property type="entry name" value="BNACNNG10540D PROTEIN"/>
    <property type="match status" value="1"/>
</dbReference>
<dbReference type="PANTHER" id="PTHR31672:SF9">
    <property type="entry name" value="F-BOX DOMAIN-CONTAINING PROTEIN"/>
    <property type="match status" value="1"/>
</dbReference>
<dbReference type="Pfam" id="PF00646">
    <property type="entry name" value="F-box"/>
    <property type="match status" value="1"/>
</dbReference>
<dbReference type="SMART" id="SM00256">
    <property type="entry name" value="FBOX"/>
    <property type="match status" value="1"/>
</dbReference>
<dbReference type="SUPFAM" id="SSF81383">
    <property type="entry name" value="F-box domain"/>
    <property type="match status" value="1"/>
</dbReference>
<dbReference type="PROSITE" id="PS50181">
    <property type="entry name" value="FBOX"/>
    <property type="match status" value="1"/>
</dbReference>
<reference key="1">
    <citation type="journal article" date="2000" name="Nature">
        <title>Sequence and analysis of chromosome 1 of the plant Arabidopsis thaliana.</title>
        <authorList>
            <person name="Theologis A."/>
            <person name="Ecker J.R."/>
            <person name="Palm C.J."/>
            <person name="Federspiel N.A."/>
            <person name="Kaul S."/>
            <person name="White O."/>
            <person name="Alonso J."/>
            <person name="Altafi H."/>
            <person name="Araujo R."/>
            <person name="Bowman C.L."/>
            <person name="Brooks S.Y."/>
            <person name="Buehler E."/>
            <person name="Chan A."/>
            <person name="Chao Q."/>
            <person name="Chen H."/>
            <person name="Cheuk R.F."/>
            <person name="Chin C.W."/>
            <person name="Chung M.K."/>
            <person name="Conn L."/>
            <person name="Conway A.B."/>
            <person name="Conway A.R."/>
            <person name="Creasy T.H."/>
            <person name="Dewar K."/>
            <person name="Dunn P."/>
            <person name="Etgu P."/>
            <person name="Feldblyum T.V."/>
            <person name="Feng J.-D."/>
            <person name="Fong B."/>
            <person name="Fujii C.Y."/>
            <person name="Gill J.E."/>
            <person name="Goldsmith A.D."/>
            <person name="Haas B."/>
            <person name="Hansen N.F."/>
            <person name="Hughes B."/>
            <person name="Huizar L."/>
            <person name="Hunter J.L."/>
            <person name="Jenkins J."/>
            <person name="Johnson-Hopson C."/>
            <person name="Khan S."/>
            <person name="Khaykin E."/>
            <person name="Kim C.J."/>
            <person name="Koo H.L."/>
            <person name="Kremenetskaia I."/>
            <person name="Kurtz D.B."/>
            <person name="Kwan A."/>
            <person name="Lam B."/>
            <person name="Langin-Hooper S."/>
            <person name="Lee A."/>
            <person name="Lee J.M."/>
            <person name="Lenz C.A."/>
            <person name="Li J.H."/>
            <person name="Li Y.-P."/>
            <person name="Lin X."/>
            <person name="Liu S.X."/>
            <person name="Liu Z.A."/>
            <person name="Luros J.S."/>
            <person name="Maiti R."/>
            <person name="Marziali A."/>
            <person name="Militscher J."/>
            <person name="Miranda M."/>
            <person name="Nguyen M."/>
            <person name="Nierman W.C."/>
            <person name="Osborne B.I."/>
            <person name="Pai G."/>
            <person name="Peterson J."/>
            <person name="Pham P.K."/>
            <person name="Rizzo M."/>
            <person name="Rooney T."/>
            <person name="Rowley D."/>
            <person name="Sakano H."/>
            <person name="Salzberg S.L."/>
            <person name="Schwartz J.R."/>
            <person name="Shinn P."/>
            <person name="Southwick A.M."/>
            <person name="Sun H."/>
            <person name="Tallon L.J."/>
            <person name="Tambunga G."/>
            <person name="Toriumi M.J."/>
            <person name="Town C.D."/>
            <person name="Utterback T."/>
            <person name="Van Aken S."/>
            <person name="Vaysberg M."/>
            <person name="Vysotskaia V.S."/>
            <person name="Walker M."/>
            <person name="Wu D."/>
            <person name="Yu G."/>
            <person name="Fraser C.M."/>
            <person name="Venter J.C."/>
            <person name="Davis R.W."/>
        </authorList>
    </citation>
    <scope>NUCLEOTIDE SEQUENCE [LARGE SCALE GENOMIC DNA]</scope>
    <source>
        <strain>cv. Columbia</strain>
    </source>
</reference>
<reference key="2">
    <citation type="journal article" date="2017" name="Plant J.">
        <title>Araport11: a complete reannotation of the Arabidopsis thaliana reference genome.</title>
        <authorList>
            <person name="Cheng C.Y."/>
            <person name="Krishnakumar V."/>
            <person name="Chan A.P."/>
            <person name="Thibaud-Nissen F."/>
            <person name="Schobel S."/>
            <person name="Town C.D."/>
        </authorList>
    </citation>
    <scope>GENOME REANNOTATION</scope>
    <source>
        <strain>cv. Columbia</strain>
    </source>
</reference>
<accession>Q9LM75</accession>
<protein>
    <recommendedName>
        <fullName>Putative F-box/kelch-repeat protein At1g20790</fullName>
    </recommendedName>
</protein>
<sequence length="435" mass="49804">MKRLPLHLLDEILFNLDPKSLGKMRCTNKSINTHISDDPNFKFEYFSRIGSSLLHISKVGSKFLCFYPYAISRLFKNMTPLKNLCNILGSCSGLVLLSINGILCVANPLTKKFRFLHYSIWGNETWIGFAVDQIDRATQRFKIVFISEQLEVSNPYETTYQFRINTGESWSLSKTTITCRASNLKKGKNSKPVYVNGDLHWLRKDGSIVAFNPETEKARLIQSQFNRKPGKLLLCTGDNRLTLISATDAVISVYALETDGQWILVRWIKNEVVHQSLPLLYWNVQAYDGKCLLVRMMSLVGSVIHRYDLRANKWRVLGSIPTWCDADRDFFLFKPSWSSVIGLLDQEHVHVLMPMPMPMPMPMPMPMHMHMHMHMPMPMAMPMPMPIAMAMPMPMPMPMPMPMTKTETETVTRSEVISSVMAIMGLVNRTLSFIN</sequence>
<name>FBK6_ARATH</name>
<organism>
    <name type="scientific">Arabidopsis thaliana</name>
    <name type="common">Mouse-ear cress</name>
    <dbReference type="NCBI Taxonomy" id="3702"/>
    <lineage>
        <taxon>Eukaryota</taxon>
        <taxon>Viridiplantae</taxon>
        <taxon>Streptophyta</taxon>
        <taxon>Embryophyta</taxon>
        <taxon>Tracheophyta</taxon>
        <taxon>Spermatophyta</taxon>
        <taxon>Magnoliopsida</taxon>
        <taxon>eudicotyledons</taxon>
        <taxon>Gunneridae</taxon>
        <taxon>Pentapetalae</taxon>
        <taxon>rosids</taxon>
        <taxon>malvids</taxon>
        <taxon>Brassicales</taxon>
        <taxon>Brassicaceae</taxon>
        <taxon>Camelineae</taxon>
        <taxon>Arabidopsis</taxon>
    </lineage>
</organism>
<evidence type="ECO:0000255" key="1">
    <source>
        <dbReference type="PROSITE-ProRule" id="PRU00080"/>
    </source>
</evidence>
<feature type="chain" id="PRO_0000283172" description="Putative F-box/kelch-repeat protein At1g20790">
    <location>
        <begin position="1"/>
        <end position="435"/>
    </location>
</feature>
<feature type="domain" description="F-box" evidence="1">
    <location>
        <begin position="1"/>
        <end position="49"/>
    </location>
</feature>
<feature type="repeat" description="Kelch 1">
    <location>
        <begin position="192"/>
        <end position="238"/>
    </location>
</feature>
<feature type="repeat" description="Kelch 2">
    <location>
        <begin position="280"/>
        <end position="335"/>
    </location>
</feature>